<proteinExistence type="evidence at protein level"/>
<keyword id="KW-0456">Lyase</keyword>
<keyword id="KW-0496">Mitochondrion</keyword>
<keyword id="KW-0520">NAD</keyword>
<keyword id="KW-0560">Oxidoreductase</keyword>
<keyword id="KW-1185">Reference proteome</keyword>
<reference key="1">
    <citation type="journal article" date="1994" name="Science">
        <title>Complete nucleotide sequence of Saccharomyces cerevisiae chromosome VIII.</title>
        <authorList>
            <person name="Johnston M."/>
            <person name="Andrews S."/>
            <person name="Brinkman R."/>
            <person name="Cooper J."/>
            <person name="Ding H."/>
            <person name="Dover J."/>
            <person name="Du Z."/>
            <person name="Favello A."/>
            <person name="Fulton L."/>
            <person name="Gattung S."/>
            <person name="Geisel C."/>
            <person name="Kirsten J."/>
            <person name="Kucaba T."/>
            <person name="Hillier L.W."/>
            <person name="Jier M."/>
            <person name="Johnston L."/>
            <person name="Langston Y."/>
            <person name="Latreille P."/>
            <person name="Louis E.J."/>
            <person name="Macri C."/>
            <person name="Mardis E."/>
            <person name="Menezes S."/>
            <person name="Mouser L."/>
            <person name="Nhan M."/>
            <person name="Rifkin L."/>
            <person name="Riles L."/>
            <person name="St Peter H."/>
            <person name="Trevaskis E."/>
            <person name="Vaughan K."/>
            <person name="Vignati D."/>
            <person name="Wilcox L."/>
            <person name="Wohldman P."/>
            <person name="Waterston R."/>
            <person name="Wilson R."/>
            <person name="Vaudin M."/>
        </authorList>
    </citation>
    <scope>NUCLEOTIDE SEQUENCE [LARGE SCALE GENOMIC DNA]</scope>
    <source>
        <strain>ATCC 204508 / S288c</strain>
    </source>
</reference>
<reference key="2">
    <citation type="journal article" date="2014" name="G3 (Bethesda)">
        <title>The reference genome sequence of Saccharomyces cerevisiae: Then and now.</title>
        <authorList>
            <person name="Engel S.R."/>
            <person name="Dietrich F.S."/>
            <person name="Fisk D.G."/>
            <person name="Binkley G."/>
            <person name="Balakrishnan R."/>
            <person name="Costanzo M.C."/>
            <person name="Dwight S.S."/>
            <person name="Hitz B.C."/>
            <person name="Karra K."/>
            <person name="Nash R.S."/>
            <person name="Weng S."/>
            <person name="Wong E.D."/>
            <person name="Lloyd P."/>
            <person name="Skrzypek M.S."/>
            <person name="Miyasato S.R."/>
            <person name="Simison M."/>
            <person name="Cherry J.M."/>
        </authorList>
    </citation>
    <scope>GENOME REANNOTATION</scope>
    <source>
        <strain>ATCC 204508 / S288c</strain>
    </source>
</reference>
<reference key="3">
    <citation type="journal article" date="2003" name="Nature">
        <title>Global analysis of protein localization in budding yeast.</title>
        <authorList>
            <person name="Huh W.-K."/>
            <person name="Falvo J.V."/>
            <person name="Gerke L.C."/>
            <person name="Carroll A.S."/>
            <person name="Howson R.W."/>
            <person name="Weissman J.S."/>
            <person name="O'Shea E.K."/>
        </authorList>
    </citation>
    <scope>SUBCELLULAR LOCATION [LARGE SCALE ANALYSIS]</scope>
</reference>
<reference key="4">
    <citation type="journal article" date="2003" name="Nature">
        <title>Global analysis of protein expression in yeast.</title>
        <authorList>
            <person name="Ghaemmaghami S."/>
            <person name="Huh W.-K."/>
            <person name="Bower K."/>
            <person name="Howson R.W."/>
            <person name="Belle A."/>
            <person name="Dephoure N."/>
            <person name="O'Shea E.K."/>
            <person name="Weissman J.S."/>
        </authorList>
    </citation>
    <scope>LEVEL OF PROTEIN EXPRESSION [LARGE SCALE ANALYSIS]</scope>
</reference>
<reference key="5">
    <citation type="journal article" date="2004" name="Mol. Microbiol.">
        <title>Htd2p/Yhr067p is a yeast 3-hydroxyacyl-ACP dehydratase essential for mitochondrial function and morphology.</title>
        <authorList>
            <person name="Kastaniotis A.J."/>
            <person name="Autio K.J."/>
            <person name="Sormunen R.T."/>
            <person name="Hiltunen J.K."/>
        </authorList>
    </citation>
    <scope>FUNCTION</scope>
    <scope>SUBCELLULAR LOCATION</scope>
</reference>
<reference key="6">
    <citation type="journal article" date="2006" name="J. Proteome Res.">
        <title>Toward the complete yeast mitochondrial proteome: multidimensional separation techniques for mitochondrial proteomics.</title>
        <authorList>
            <person name="Reinders J."/>
            <person name="Zahedi R.P."/>
            <person name="Pfanner N."/>
            <person name="Meisinger C."/>
            <person name="Sickmann A."/>
        </authorList>
    </citation>
    <scope>SUBCELLULAR LOCATION [LARGE SCALE ANALYSIS]</scope>
    <scope>IDENTIFICATION BY MASS SPECTROMETRY</scope>
</reference>
<accession>P38790</accession>
<accession>D3DL16</accession>
<protein>
    <recommendedName>
        <fullName>Hydroxyacyl-thioester dehydratase type 2, mitochondrial</fullName>
        <ecNumber>4.2.1.-</ecNumber>
    </recommendedName>
    <alternativeName>
        <fullName>3-hydroxyacyl-[acyl-carrier-protein] dehydratase</fullName>
    </alternativeName>
</protein>
<name>HTD2_YEAST</name>
<comment type="function">
    <text evidence="3">Mitochondrial 3-hydroxyacyl-thioester dehydratase involved in fatty acid biosynthesis. Required for respiratory growth and for normal mitochondrial morphology.</text>
</comment>
<comment type="subcellular location">
    <subcellularLocation>
        <location evidence="1 3 4">Mitochondrion</location>
    </subcellularLocation>
</comment>
<comment type="miscellaneous">
    <text evidence="2">Present with 799 molecules/cell in log phase SD medium.</text>
</comment>
<comment type="similarity">
    <text evidence="5">Belongs to the HTD2 family.</text>
</comment>
<gene>
    <name type="primary">HTD2</name>
    <name type="synonym">RMD12</name>
    <name type="ordered locus">YHR067W</name>
</gene>
<sequence>MKSKTWIFRDVLSSHRTKAFDSLLCRRLPVSKATKHLQLGEHFLFFPPSFEKLDRDGYFNYQNPASLLGNPDLRYRRRIWGQGELVQYLPVTLDQEYTCHESIKYVKKIRDEHVVCIERTLLQERPENVSSPMDICLFERRVLMYTNSPANKTAVKMPVGEENYKILKNFTVTDMDIVAYGQMSLNPHRIHWDKEYSRYVEGYDDIIMQGPFSVQLLQKCIQPFLEQPIRQLRYRNLNYIYPNTTLSICQSLSSSSGMYTFQIRDLQKANLVYMKADVFC</sequence>
<organism>
    <name type="scientific">Saccharomyces cerevisiae (strain ATCC 204508 / S288c)</name>
    <name type="common">Baker's yeast</name>
    <dbReference type="NCBI Taxonomy" id="559292"/>
    <lineage>
        <taxon>Eukaryota</taxon>
        <taxon>Fungi</taxon>
        <taxon>Dikarya</taxon>
        <taxon>Ascomycota</taxon>
        <taxon>Saccharomycotina</taxon>
        <taxon>Saccharomycetes</taxon>
        <taxon>Saccharomycetales</taxon>
        <taxon>Saccharomycetaceae</taxon>
        <taxon>Saccharomyces</taxon>
    </lineage>
</organism>
<feature type="chain" id="PRO_0000202898" description="Hydroxyacyl-thioester dehydratase type 2, mitochondrial">
    <location>
        <begin position="1"/>
        <end position="280"/>
    </location>
</feature>
<evidence type="ECO:0000269" key="1">
    <source>
    </source>
</evidence>
<evidence type="ECO:0000269" key="2">
    <source>
    </source>
</evidence>
<evidence type="ECO:0000269" key="3">
    <source>
    </source>
</evidence>
<evidence type="ECO:0000269" key="4">
    <source>
    </source>
</evidence>
<evidence type="ECO:0000305" key="5"/>
<dbReference type="EC" id="4.2.1.-"/>
<dbReference type="EMBL" id="U00061">
    <property type="protein sequence ID" value="AAB68378.1"/>
    <property type="molecule type" value="Genomic_DNA"/>
</dbReference>
<dbReference type="EMBL" id="BK006934">
    <property type="protein sequence ID" value="DAA06760.1"/>
    <property type="molecule type" value="Genomic_DNA"/>
</dbReference>
<dbReference type="PIR" id="S46699">
    <property type="entry name" value="S46699"/>
</dbReference>
<dbReference type="RefSeq" id="NP_011934.1">
    <property type="nucleotide sequence ID" value="NM_001179197.1"/>
</dbReference>
<dbReference type="SMR" id="P38790"/>
<dbReference type="BioGRID" id="36499">
    <property type="interactions" value="475"/>
</dbReference>
<dbReference type="DIP" id="DIP-4110N"/>
<dbReference type="FunCoup" id="P38790">
    <property type="interactions" value="74"/>
</dbReference>
<dbReference type="IntAct" id="P38790">
    <property type="interactions" value="3"/>
</dbReference>
<dbReference type="MINT" id="P38790"/>
<dbReference type="STRING" id="4932.YHR067W"/>
<dbReference type="PaxDb" id="4932-YHR067W"/>
<dbReference type="PeptideAtlas" id="P38790"/>
<dbReference type="EnsemblFungi" id="YHR067W_mRNA">
    <property type="protein sequence ID" value="YHR067W"/>
    <property type="gene ID" value="YHR067W"/>
</dbReference>
<dbReference type="GeneID" id="856464"/>
<dbReference type="KEGG" id="sce:YHR067W"/>
<dbReference type="AGR" id="SGD:S000001109"/>
<dbReference type="SGD" id="S000001109">
    <property type="gene designation" value="HTD2"/>
</dbReference>
<dbReference type="VEuPathDB" id="FungiDB:YHR067W"/>
<dbReference type="eggNOG" id="ENOG502S5QU">
    <property type="taxonomic scope" value="Eukaryota"/>
</dbReference>
<dbReference type="HOGENOM" id="CLU_028690_2_0_1"/>
<dbReference type="InParanoid" id="P38790"/>
<dbReference type="OMA" id="MWAGSQF"/>
<dbReference type="OrthoDB" id="3257538at2759"/>
<dbReference type="BioCyc" id="MetaCyc:G3O-31118-MONOMER"/>
<dbReference type="BioCyc" id="YEAST:G3O-31118-MONOMER"/>
<dbReference type="BioGRID-ORCS" id="856464">
    <property type="hits" value="0 hits in 10 CRISPR screens"/>
</dbReference>
<dbReference type="PRO" id="PR:P38790"/>
<dbReference type="Proteomes" id="UP000002311">
    <property type="component" value="Chromosome VIII"/>
</dbReference>
<dbReference type="RNAct" id="P38790">
    <property type="molecule type" value="protein"/>
</dbReference>
<dbReference type="GO" id="GO:0005739">
    <property type="term" value="C:mitochondrion"/>
    <property type="evidence" value="ECO:0000314"/>
    <property type="project" value="SGD"/>
</dbReference>
<dbReference type="GO" id="GO:0019171">
    <property type="term" value="F:(3R)-hydroxyacyl-[acyl-carrier-protein] dehydratase activity"/>
    <property type="evidence" value="ECO:0000314"/>
    <property type="project" value="SGD"/>
</dbReference>
<dbReference type="GO" id="GO:0016491">
    <property type="term" value="F:oxidoreductase activity"/>
    <property type="evidence" value="ECO:0007669"/>
    <property type="project" value="UniProtKB-KW"/>
</dbReference>
<dbReference type="GO" id="GO:0006633">
    <property type="term" value="P:fatty acid biosynthetic process"/>
    <property type="evidence" value="ECO:0007669"/>
    <property type="project" value="InterPro"/>
</dbReference>
<dbReference type="GO" id="GO:0006631">
    <property type="term" value="P:fatty acid metabolic process"/>
    <property type="evidence" value="ECO:0000250"/>
    <property type="project" value="SGD"/>
</dbReference>
<dbReference type="Gene3D" id="3.10.129.10">
    <property type="entry name" value="Hotdog Thioesterase"/>
    <property type="match status" value="1"/>
</dbReference>
<dbReference type="InterPro" id="IPR029069">
    <property type="entry name" value="HotDog_dom_sf"/>
</dbReference>
<dbReference type="InterPro" id="IPR026223">
    <property type="entry name" value="Htd2"/>
</dbReference>
<dbReference type="InterPro" id="IPR052741">
    <property type="entry name" value="Mitochondrial_HTD2"/>
</dbReference>
<dbReference type="PANTHER" id="PTHR28152">
    <property type="entry name" value="HYDROXYACYL-THIOESTER DEHYDRATASE TYPE 2, MITOCHONDRIAL"/>
    <property type="match status" value="1"/>
</dbReference>
<dbReference type="PANTHER" id="PTHR28152:SF1">
    <property type="entry name" value="HYDROXYACYL-THIOESTER DEHYDRATASE TYPE 2, MITOCHONDRIAL"/>
    <property type="match status" value="1"/>
</dbReference>
<dbReference type="PRINTS" id="PR02096">
    <property type="entry name" value="HTDHYDRTASE2"/>
</dbReference>
<dbReference type="SUPFAM" id="SSF54637">
    <property type="entry name" value="Thioesterase/thiol ester dehydrase-isomerase"/>
    <property type="match status" value="1"/>
</dbReference>